<proteinExistence type="inferred from homology"/>
<name>PSBH_PROMA</name>
<keyword id="KW-0472">Membrane</keyword>
<keyword id="KW-0602">Photosynthesis</keyword>
<keyword id="KW-0604">Photosystem II</keyword>
<keyword id="KW-1185">Reference proteome</keyword>
<keyword id="KW-0793">Thylakoid</keyword>
<keyword id="KW-0812">Transmembrane</keyword>
<keyword id="KW-1133">Transmembrane helix</keyword>
<gene>
    <name evidence="1" type="primary">psbH</name>
    <name type="ordered locus">Pro_0283</name>
</gene>
<dbReference type="EMBL" id="AE017126">
    <property type="protein sequence ID" value="AAP99329.1"/>
    <property type="molecule type" value="Genomic_DNA"/>
</dbReference>
<dbReference type="RefSeq" id="NP_874677.1">
    <property type="nucleotide sequence ID" value="NC_005042.1"/>
</dbReference>
<dbReference type="RefSeq" id="WP_011124438.1">
    <property type="nucleotide sequence ID" value="NC_005042.1"/>
</dbReference>
<dbReference type="SMR" id="Q7VDT5"/>
<dbReference type="STRING" id="167539.Pro_0283"/>
<dbReference type="EnsemblBacteria" id="AAP99329">
    <property type="protein sequence ID" value="AAP99329"/>
    <property type="gene ID" value="Pro_0283"/>
</dbReference>
<dbReference type="KEGG" id="pma:Pro_0283"/>
<dbReference type="PATRIC" id="fig|167539.5.peg.290"/>
<dbReference type="eggNOG" id="ENOG50332MV">
    <property type="taxonomic scope" value="Bacteria"/>
</dbReference>
<dbReference type="HOGENOM" id="CLU_190203_0_0_3"/>
<dbReference type="OrthoDB" id="427121at2"/>
<dbReference type="Proteomes" id="UP000001420">
    <property type="component" value="Chromosome"/>
</dbReference>
<dbReference type="GO" id="GO:0009523">
    <property type="term" value="C:photosystem II"/>
    <property type="evidence" value="ECO:0007669"/>
    <property type="project" value="UniProtKB-KW"/>
</dbReference>
<dbReference type="GO" id="GO:0031676">
    <property type="term" value="C:plasma membrane-derived thylakoid membrane"/>
    <property type="evidence" value="ECO:0007669"/>
    <property type="project" value="UniProtKB-SubCell"/>
</dbReference>
<dbReference type="GO" id="GO:0042301">
    <property type="term" value="F:phosphate ion binding"/>
    <property type="evidence" value="ECO:0007669"/>
    <property type="project" value="InterPro"/>
</dbReference>
<dbReference type="GO" id="GO:0015979">
    <property type="term" value="P:photosynthesis"/>
    <property type="evidence" value="ECO:0007669"/>
    <property type="project" value="UniProtKB-UniRule"/>
</dbReference>
<dbReference type="GO" id="GO:0050821">
    <property type="term" value="P:protein stabilization"/>
    <property type="evidence" value="ECO:0007669"/>
    <property type="project" value="InterPro"/>
</dbReference>
<dbReference type="Gene3D" id="1.20.5.880">
    <property type="entry name" value="Photosystem II reaction center protein H"/>
    <property type="match status" value="1"/>
</dbReference>
<dbReference type="HAMAP" id="MF_00752">
    <property type="entry name" value="PSII_PsbH"/>
    <property type="match status" value="1"/>
</dbReference>
<dbReference type="InterPro" id="IPR001056">
    <property type="entry name" value="PSII_PsbH"/>
</dbReference>
<dbReference type="InterPro" id="IPR036863">
    <property type="entry name" value="PSII_PsbH_sf"/>
</dbReference>
<dbReference type="NCBIfam" id="NF002728">
    <property type="entry name" value="PRK02624.1"/>
    <property type="match status" value="1"/>
</dbReference>
<dbReference type="PANTHER" id="PTHR34469">
    <property type="entry name" value="PHOTOSYSTEM II REACTION CENTER PROTEIN H"/>
    <property type="match status" value="1"/>
</dbReference>
<dbReference type="PANTHER" id="PTHR34469:SF4">
    <property type="entry name" value="PHOTOSYSTEM II REACTION CENTER PROTEIN H"/>
    <property type="match status" value="1"/>
</dbReference>
<dbReference type="Pfam" id="PF00737">
    <property type="entry name" value="PsbH"/>
    <property type="match status" value="1"/>
</dbReference>
<dbReference type="SUPFAM" id="SSF161025">
    <property type="entry name" value="Photosystem II 10 kDa phosphoprotein PsbH"/>
    <property type="match status" value="1"/>
</dbReference>
<sequence>MGQKTAVGSLLKSIGNSGQGKVVAGWGAVPVMAFVGVLLLVFLVILLQIYNQSLLLQGFSVDWNGVN</sequence>
<reference key="1">
    <citation type="journal article" date="2003" name="Proc. Natl. Acad. Sci. U.S.A.">
        <title>Genome sequence of the cyanobacterium Prochlorococcus marinus SS120, a nearly minimal oxyphototrophic genome.</title>
        <authorList>
            <person name="Dufresne A."/>
            <person name="Salanoubat M."/>
            <person name="Partensky F."/>
            <person name="Artiguenave F."/>
            <person name="Axmann I.M."/>
            <person name="Barbe V."/>
            <person name="Duprat S."/>
            <person name="Galperin M.Y."/>
            <person name="Koonin E.V."/>
            <person name="Le Gall F."/>
            <person name="Makarova K.S."/>
            <person name="Ostrowski M."/>
            <person name="Oztas S."/>
            <person name="Robert C."/>
            <person name="Rogozin I.B."/>
            <person name="Scanlan D.J."/>
            <person name="Tandeau de Marsac N."/>
            <person name="Weissenbach J."/>
            <person name="Wincker P."/>
            <person name="Wolf Y.I."/>
            <person name="Hess W.R."/>
        </authorList>
    </citation>
    <scope>NUCLEOTIDE SEQUENCE [LARGE SCALE GENOMIC DNA]</scope>
    <source>
        <strain>SARG / CCMP1375 / SS120</strain>
    </source>
</reference>
<comment type="function">
    <text evidence="1">One of the components of the core complex of photosystem II (PSII), required for its stability and/or assembly. PSII is a light-driven water:plastoquinone oxidoreductase that uses light energy to abstract electrons from H(2)O, generating O(2) and a proton gradient subsequently used for ATP formation. It consists of a core antenna complex that captures photons, and an electron transfer chain that converts photonic excitation into a charge separation.</text>
</comment>
<comment type="subunit">
    <text evidence="2">PSII is composed of 1 copy each of membrane proteins PsbA, PsbB, PsbC, PsbD, PsbE, PsbF, PsbH, PsbI, PsbJ, PsbK, PsbL, PsbM, PsbT, PsbX, PsbY, Psb30/Ycf12, peripheral proteins PsbO, CyanoQ (PsbQ), PsbU, PsbV and a large number of cofactors. It forms dimeric complexes.</text>
</comment>
<comment type="subcellular location">
    <subcellularLocation>
        <location evidence="1">Cellular thylakoid membrane</location>
        <topology evidence="1">Single-pass membrane protein</topology>
    </subcellularLocation>
</comment>
<comment type="similarity">
    <text evidence="1">Belongs to the PsbH family.</text>
</comment>
<protein>
    <recommendedName>
        <fullName evidence="1">Photosystem II reaction center protein H</fullName>
        <shortName evidence="1">PSII-H</shortName>
    </recommendedName>
</protein>
<accession>Q7VDT5</accession>
<feature type="chain" id="PRO_0000070543" description="Photosystem II reaction center protein H">
    <location>
        <begin position="1"/>
        <end position="67"/>
    </location>
</feature>
<feature type="transmembrane region" description="Helical" evidence="1">
    <location>
        <begin position="27"/>
        <end position="47"/>
    </location>
</feature>
<evidence type="ECO:0000255" key="1">
    <source>
        <dbReference type="HAMAP-Rule" id="MF_00752"/>
    </source>
</evidence>
<evidence type="ECO:0000305" key="2"/>
<organism>
    <name type="scientific">Prochlorococcus marinus (strain SARG / CCMP1375 / SS120)</name>
    <dbReference type="NCBI Taxonomy" id="167539"/>
    <lineage>
        <taxon>Bacteria</taxon>
        <taxon>Bacillati</taxon>
        <taxon>Cyanobacteriota</taxon>
        <taxon>Cyanophyceae</taxon>
        <taxon>Synechococcales</taxon>
        <taxon>Prochlorococcaceae</taxon>
        <taxon>Prochlorococcus</taxon>
    </lineage>
</organism>